<comment type="function">
    <text evidence="2">Component of the ubiquinol-cytochrome c reductase complex (complex III or cytochrome b-c1 complex) that is part of the mitochondrial respiratory chain. The b-c1 complex mediates electron transfer from ubiquinol to cytochrome c. Contributes to the generation of a proton gradient across the mitochondrial membrane that is then used for ATP synthesis.</text>
</comment>
<comment type="cofactor">
    <cofactor evidence="2">
        <name>heme b</name>
        <dbReference type="ChEBI" id="CHEBI:60344"/>
    </cofactor>
    <text evidence="2">Binds 2 heme b groups non-covalently.</text>
</comment>
<comment type="subunit">
    <text evidence="2">The cytochrome bc1 complex contains 11 subunits: 3 respiratory subunits (MT-CYB, CYC1 and UQCRFS1), 2 core proteins (UQCRC1 and UQCRC2) and 6 low-molecular weight proteins (UQCRH/QCR6, UQCRB/QCR7, UQCRQ/QCR8, UQCR10/QCR9, UQCR11/QCR10 and a cleavage product of UQCRFS1). This cytochrome bc1 complex then forms a dimer.</text>
</comment>
<comment type="subcellular location">
    <subcellularLocation>
        <location evidence="2">Mitochondrion inner membrane</location>
        <topology evidence="2">Multi-pass membrane protein</topology>
    </subcellularLocation>
</comment>
<comment type="miscellaneous">
    <text evidence="1">Heme 1 (or BL or b562) is low-potential and absorbs at about 562 nm, and heme 2 (or BH or b566) is high-potential and absorbs at about 566 nm.</text>
</comment>
<comment type="similarity">
    <text evidence="3 4">Belongs to the cytochrome b family.</text>
</comment>
<comment type="caution">
    <text evidence="2">The full-length protein contains only eight transmembrane helices, not nine as predicted by bioinformatics tools.</text>
</comment>
<name>CYB_MARZI</name>
<gene>
    <name type="primary">MT-CYB</name>
    <name type="synonym">COB</name>
    <name type="synonym">CYTB</name>
    <name type="synonym">MTCYB</name>
</gene>
<accession>Q9TEB5</accession>
<accession>Q8WBL9</accession>
<accession>Q9TEB7</accession>
<sequence>MTNIRKTHPLAKIINNSFIDWPAPSNISAWWNFGSLLGICLILQILTGLFLAMHYTSDTATAFSSVTHICRDVNYGWIIRYMHANGASMFFICLFLHVGRGLYYGSYMYPETWNIGIILLFAVMATAFMGYVLPWGQMSFWGATVITNLLSAIPYIGTSLVEWIWGGFSVDKATLTRFFAFHFILPFIVLALAAVHLLFLHETGSNNPSGIPSDSDKIPFHPYYTIKDILGALFLILVLMMLVLFSPDLLGDPDNYIPANPLNTPPHIKPEWYFLFAYAILRSIPNKLGGVLALVFSILVLAIVPLLHTSKQRGMMFRPLSQCLFWLLVADLLTLTWIGGQPVEHPFITIGQLASILYFAILLILMPAISIIENNLLKW</sequence>
<geneLocation type="mitochondrion"/>
<protein>
    <recommendedName>
        <fullName>Cytochrome b</fullName>
    </recommendedName>
    <alternativeName>
        <fullName>Complex III subunit 3</fullName>
    </alternativeName>
    <alternativeName>
        <fullName>Complex III subunit III</fullName>
    </alternativeName>
    <alternativeName>
        <fullName>Cytochrome b-c1 complex subunit 3</fullName>
    </alternativeName>
    <alternativeName>
        <fullName>Ubiquinol-cytochrome-c reductase complex cytochrome b subunit</fullName>
    </alternativeName>
</protein>
<feature type="chain" id="PRO_0000061163" description="Cytochrome b">
    <location>
        <begin position="1"/>
        <end position="379"/>
    </location>
</feature>
<feature type="transmembrane region" description="Helical" evidence="2">
    <location>
        <begin position="33"/>
        <end position="53"/>
    </location>
</feature>
<feature type="transmembrane region" description="Helical" evidence="2">
    <location>
        <begin position="77"/>
        <end position="98"/>
    </location>
</feature>
<feature type="transmembrane region" description="Helical" evidence="2">
    <location>
        <begin position="113"/>
        <end position="133"/>
    </location>
</feature>
<feature type="transmembrane region" description="Helical" evidence="2">
    <location>
        <begin position="178"/>
        <end position="198"/>
    </location>
</feature>
<feature type="transmembrane region" description="Helical" evidence="2">
    <location>
        <begin position="226"/>
        <end position="246"/>
    </location>
</feature>
<feature type="transmembrane region" description="Helical" evidence="2">
    <location>
        <begin position="288"/>
        <end position="308"/>
    </location>
</feature>
<feature type="transmembrane region" description="Helical" evidence="2">
    <location>
        <begin position="320"/>
        <end position="340"/>
    </location>
</feature>
<feature type="transmembrane region" description="Helical" evidence="2">
    <location>
        <begin position="347"/>
        <end position="367"/>
    </location>
</feature>
<feature type="binding site" description="axial binding residue" evidence="2">
    <location>
        <position position="83"/>
    </location>
    <ligand>
        <name>heme b</name>
        <dbReference type="ChEBI" id="CHEBI:60344"/>
        <label>b562</label>
    </ligand>
    <ligandPart>
        <name>Fe</name>
        <dbReference type="ChEBI" id="CHEBI:18248"/>
    </ligandPart>
</feature>
<feature type="binding site" description="axial binding residue" evidence="2">
    <location>
        <position position="97"/>
    </location>
    <ligand>
        <name>heme b</name>
        <dbReference type="ChEBI" id="CHEBI:60344"/>
        <label>b566</label>
    </ligand>
    <ligandPart>
        <name>Fe</name>
        <dbReference type="ChEBI" id="CHEBI:18248"/>
    </ligandPart>
</feature>
<feature type="binding site" description="axial binding residue" evidence="2">
    <location>
        <position position="182"/>
    </location>
    <ligand>
        <name>heme b</name>
        <dbReference type="ChEBI" id="CHEBI:60344"/>
        <label>b562</label>
    </ligand>
    <ligandPart>
        <name>Fe</name>
        <dbReference type="ChEBI" id="CHEBI:18248"/>
    </ligandPart>
</feature>
<feature type="binding site" description="axial binding residue" evidence="2">
    <location>
        <position position="196"/>
    </location>
    <ligand>
        <name>heme b</name>
        <dbReference type="ChEBI" id="CHEBI:60344"/>
        <label>b566</label>
    </ligand>
    <ligandPart>
        <name>Fe</name>
        <dbReference type="ChEBI" id="CHEBI:18248"/>
    </ligandPart>
</feature>
<feature type="binding site" evidence="2">
    <location>
        <position position="201"/>
    </location>
    <ligand>
        <name>a ubiquinone</name>
        <dbReference type="ChEBI" id="CHEBI:16389"/>
    </ligand>
</feature>
<feature type="sequence variant" description="In strain: Isolate AFTC 25274 and Isolate MZI-CH6.">
    <original>W</original>
    <variation>L</variation>
    <location>
        <position position="21"/>
    </location>
</feature>
<feature type="sequence variant" description="In strain: Isolate MZI-CH6.">
    <original>L</original>
    <variation>V</variation>
    <location>
        <position position="150"/>
    </location>
</feature>
<feature type="sequence variant" description="In strain: Isolate AFTC 25274.">
    <original>S</original>
    <variation>T</variation>
    <location>
        <position position="159"/>
    </location>
</feature>
<reference key="1">
    <citation type="journal article" date="1999" name="Zool. Sci.">
        <title>Intraspecific variation of mitochondrial cytochrome b gene sequences of the Japanese marten Martes melampus and the sable Martes zibellina (Mustelidae, Carnivora, Mammalia) in Japan.</title>
        <authorList>
            <person name="Kurose N."/>
            <person name="Masuda R."/>
            <person name="Siriaroonrat B."/>
            <person name="Yoshida M.C."/>
        </authorList>
    </citation>
    <scope>NUCLEOTIDE SEQUENCE [GENOMIC DNA]</scope>
    <source>
        <strain>Isolate MZI-CH1</strain>
        <strain>Isolate MZI-CH6</strain>
    </source>
</reference>
<reference key="2">
    <citation type="journal article" date="2002" name="Mol. Phylogenet. Evol.">
        <title>Molecular evolution of holarctic Martens (genus Martes, Mammalia: Carnivora: Mustelidae).</title>
        <authorList>
            <person name="Stone K.D."/>
            <person name="Cook J.A."/>
        </authorList>
    </citation>
    <scope>NUCLEOTIDE SEQUENCE [GENOMIC DNA]</scope>
    <source>
        <strain>Isolate AFTC 25274</strain>
    </source>
</reference>
<keyword id="KW-0249">Electron transport</keyword>
<keyword id="KW-0349">Heme</keyword>
<keyword id="KW-0408">Iron</keyword>
<keyword id="KW-0472">Membrane</keyword>
<keyword id="KW-0479">Metal-binding</keyword>
<keyword id="KW-0496">Mitochondrion</keyword>
<keyword id="KW-0999">Mitochondrion inner membrane</keyword>
<keyword id="KW-0679">Respiratory chain</keyword>
<keyword id="KW-0812">Transmembrane</keyword>
<keyword id="KW-1133">Transmembrane helix</keyword>
<keyword id="KW-0813">Transport</keyword>
<keyword id="KW-0830">Ubiquinone</keyword>
<organism>
    <name type="scientific">Martes zibellina</name>
    <name type="common">Sable</name>
    <dbReference type="NCBI Taxonomy" id="36722"/>
    <lineage>
        <taxon>Eukaryota</taxon>
        <taxon>Metazoa</taxon>
        <taxon>Chordata</taxon>
        <taxon>Craniata</taxon>
        <taxon>Vertebrata</taxon>
        <taxon>Euteleostomi</taxon>
        <taxon>Mammalia</taxon>
        <taxon>Eutheria</taxon>
        <taxon>Laurasiatheria</taxon>
        <taxon>Carnivora</taxon>
        <taxon>Caniformia</taxon>
        <taxon>Musteloidea</taxon>
        <taxon>Mustelidae</taxon>
        <taxon>Guloninae</taxon>
        <taxon>Martes</taxon>
    </lineage>
</organism>
<proteinExistence type="inferred from homology"/>
<evidence type="ECO:0000250" key="1"/>
<evidence type="ECO:0000250" key="2">
    <source>
        <dbReference type="UniProtKB" id="P00157"/>
    </source>
</evidence>
<evidence type="ECO:0000255" key="3">
    <source>
        <dbReference type="PROSITE-ProRule" id="PRU00967"/>
    </source>
</evidence>
<evidence type="ECO:0000255" key="4">
    <source>
        <dbReference type="PROSITE-ProRule" id="PRU00968"/>
    </source>
</evidence>
<dbReference type="EMBL" id="AB012356">
    <property type="protein sequence ID" value="BAA83984.1"/>
    <property type="molecule type" value="Genomic_DNA"/>
</dbReference>
<dbReference type="EMBL" id="AB012361">
    <property type="protein sequence ID" value="BAA83989.1"/>
    <property type="molecule type" value="Genomic_DNA"/>
</dbReference>
<dbReference type="EMBL" id="AF448244">
    <property type="protein sequence ID" value="AAL60226.1"/>
    <property type="molecule type" value="Genomic_DNA"/>
</dbReference>
<dbReference type="SMR" id="Q9TEB5"/>
<dbReference type="GO" id="GO:0005743">
    <property type="term" value="C:mitochondrial inner membrane"/>
    <property type="evidence" value="ECO:0007669"/>
    <property type="project" value="UniProtKB-SubCell"/>
</dbReference>
<dbReference type="GO" id="GO:0045275">
    <property type="term" value="C:respiratory chain complex III"/>
    <property type="evidence" value="ECO:0007669"/>
    <property type="project" value="InterPro"/>
</dbReference>
<dbReference type="GO" id="GO:0046872">
    <property type="term" value="F:metal ion binding"/>
    <property type="evidence" value="ECO:0007669"/>
    <property type="project" value="UniProtKB-KW"/>
</dbReference>
<dbReference type="GO" id="GO:0008121">
    <property type="term" value="F:ubiquinol-cytochrome-c reductase activity"/>
    <property type="evidence" value="ECO:0007669"/>
    <property type="project" value="InterPro"/>
</dbReference>
<dbReference type="GO" id="GO:0006122">
    <property type="term" value="P:mitochondrial electron transport, ubiquinol to cytochrome c"/>
    <property type="evidence" value="ECO:0007669"/>
    <property type="project" value="TreeGrafter"/>
</dbReference>
<dbReference type="CDD" id="cd00290">
    <property type="entry name" value="cytochrome_b_C"/>
    <property type="match status" value="1"/>
</dbReference>
<dbReference type="CDD" id="cd00284">
    <property type="entry name" value="Cytochrome_b_N"/>
    <property type="match status" value="1"/>
</dbReference>
<dbReference type="FunFam" id="1.20.810.10:FF:000002">
    <property type="entry name" value="Cytochrome b"/>
    <property type="match status" value="1"/>
</dbReference>
<dbReference type="Gene3D" id="1.20.810.10">
    <property type="entry name" value="Cytochrome Bc1 Complex, Chain C"/>
    <property type="match status" value="1"/>
</dbReference>
<dbReference type="InterPro" id="IPR005798">
    <property type="entry name" value="Cyt_b/b6_C"/>
</dbReference>
<dbReference type="InterPro" id="IPR036150">
    <property type="entry name" value="Cyt_b/b6_C_sf"/>
</dbReference>
<dbReference type="InterPro" id="IPR005797">
    <property type="entry name" value="Cyt_b/b6_N"/>
</dbReference>
<dbReference type="InterPro" id="IPR027387">
    <property type="entry name" value="Cytb/b6-like_sf"/>
</dbReference>
<dbReference type="InterPro" id="IPR030689">
    <property type="entry name" value="Cytochrome_b"/>
</dbReference>
<dbReference type="InterPro" id="IPR048260">
    <property type="entry name" value="Cytochrome_b_C_euk/bac"/>
</dbReference>
<dbReference type="InterPro" id="IPR048259">
    <property type="entry name" value="Cytochrome_b_N_euk/bac"/>
</dbReference>
<dbReference type="InterPro" id="IPR016174">
    <property type="entry name" value="Di-haem_cyt_TM"/>
</dbReference>
<dbReference type="PANTHER" id="PTHR19271">
    <property type="entry name" value="CYTOCHROME B"/>
    <property type="match status" value="1"/>
</dbReference>
<dbReference type="PANTHER" id="PTHR19271:SF16">
    <property type="entry name" value="CYTOCHROME B"/>
    <property type="match status" value="1"/>
</dbReference>
<dbReference type="Pfam" id="PF00032">
    <property type="entry name" value="Cytochrom_B_C"/>
    <property type="match status" value="1"/>
</dbReference>
<dbReference type="Pfam" id="PF00033">
    <property type="entry name" value="Cytochrome_B"/>
    <property type="match status" value="1"/>
</dbReference>
<dbReference type="PIRSF" id="PIRSF038885">
    <property type="entry name" value="COB"/>
    <property type="match status" value="1"/>
</dbReference>
<dbReference type="SUPFAM" id="SSF81648">
    <property type="entry name" value="a domain/subunit of cytochrome bc1 complex (Ubiquinol-cytochrome c reductase)"/>
    <property type="match status" value="1"/>
</dbReference>
<dbReference type="SUPFAM" id="SSF81342">
    <property type="entry name" value="Transmembrane di-heme cytochromes"/>
    <property type="match status" value="1"/>
</dbReference>
<dbReference type="PROSITE" id="PS51003">
    <property type="entry name" value="CYTB_CTER"/>
    <property type="match status" value="1"/>
</dbReference>
<dbReference type="PROSITE" id="PS51002">
    <property type="entry name" value="CYTB_NTER"/>
    <property type="match status" value="1"/>
</dbReference>